<sequence>MEEFQVYLELNRSRRHDFLYPLIFREYIYALAHEHGLNKSMIFFENQGYGNKFSSLIVKRLILRMDQQNRLISSANDSNQNPVFGHNNNLYSQMIAAGFAVIVEIPFSLRLISYSQGAEAAKSHNFQSIHSIFPFLEDKFSHLNYVLEALIPHPIHLEILVQALRYWVKDASSLHLLRFSLYEYCNLKSFITPKKSISIFNPRLFLFLYNSHTCEYESIFLFLRNQSSHLRSTSSGVFLERIFFYGKIKYLGEVFYNDFQNNLWLFKDPFIHFIRYQGKSILASKDTSLLINKWKYYFVDLWQYYFYLWSQSGRVRINQLSKYSLDFLGYLSSVRLNPSVVRSQMLENSFLIDNAVKTLDTRIPIISIIGSLSKAKFCNTLGHPISKPTWADSPDSDIIDRFVRISRNLSHYHSGSSKKKSLYRIKYILRFSCVKTLARKHKSTVRAFLKKLGSEFLEEFFTETEEEHVFSLIFPRGFFALRKVYRGRIWYLDIICINALVNHS</sequence>
<reference key="1">
    <citation type="journal article" date="2003" name="Evolution">
        <title>Cryptic repeated genomic recombination during speciation in Gossypium gossypioides.</title>
        <authorList>
            <person name="Cronn R."/>
            <person name="Small R.L."/>
            <person name="Haselkorn T."/>
            <person name="Wendel J.F."/>
        </authorList>
    </citation>
    <scope>NUCLEOTIDE SEQUENCE [GENOMIC DNA]</scope>
</reference>
<gene>
    <name evidence="1" type="primary">matK</name>
</gene>
<organism>
    <name type="scientific">Gossypium gossypioides</name>
    <name type="common">Mexican cotton</name>
    <name type="synonym">Selera gossypioides</name>
    <dbReference type="NCBI Taxonomy" id="34282"/>
    <lineage>
        <taxon>Eukaryota</taxon>
        <taxon>Viridiplantae</taxon>
        <taxon>Streptophyta</taxon>
        <taxon>Embryophyta</taxon>
        <taxon>Tracheophyta</taxon>
        <taxon>Spermatophyta</taxon>
        <taxon>Magnoliopsida</taxon>
        <taxon>eudicotyledons</taxon>
        <taxon>Gunneridae</taxon>
        <taxon>Pentapetalae</taxon>
        <taxon>rosids</taxon>
        <taxon>malvids</taxon>
        <taxon>Malvales</taxon>
        <taxon>Malvaceae</taxon>
        <taxon>Malvoideae</taxon>
        <taxon>Gossypium</taxon>
    </lineage>
</organism>
<accession>Q95EF8</accession>
<protein>
    <recommendedName>
        <fullName evidence="1">Maturase K</fullName>
    </recommendedName>
    <alternativeName>
        <fullName evidence="1">Intron maturase</fullName>
    </alternativeName>
</protein>
<proteinExistence type="inferred from homology"/>
<comment type="function">
    <text evidence="1">Usually encoded in the trnK tRNA gene intron. Probably assists in splicing its own and other chloroplast group II introns.</text>
</comment>
<comment type="subcellular location">
    <subcellularLocation>
        <location>Plastid</location>
        <location>Chloroplast</location>
    </subcellularLocation>
</comment>
<comment type="similarity">
    <text evidence="1">Belongs to the intron maturase 2 family. MatK subfamily.</text>
</comment>
<evidence type="ECO:0000255" key="1">
    <source>
        <dbReference type="HAMAP-Rule" id="MF_01390"/>
    </source>
</evidence>
<feature type="chain" id="PRO_0000143405" description="Maturase K">
    <location>
        <begin position="1"/>
        <end position="504"/>
    </location>
</feature>
<dbReference type="EMBL" id="AF520727">
    <property type="protein sequence ID" value="AAM77355.1"/>
    <property type="molecule type" value="Genomic_DNA"/>
</dbReference>
<dbReference type="RefSeq" id="YP_006303472.1">
    <property type="nucleotide sequence ID" value="NC_017894.1"/>
</dbReference>
<dbReference type="GeneID" id="12799238"/>
<dbReference type="GO" id="GO:0009507">
    <property type="term" value="C:chloroplast"/>
    <property type="evidence" value="ECO:0007669"/>
    <property type="project" value="UniProtKB-SubCell"/>
</dbReference>
<dbReference type="GO" id="GO:0003723">
    <property type="term" value="F:RNA binding"/>
    <property type="evidence" value="ECO:0007669"/>
    <property type="project" value="UniProtKB-KW"/>
</dbReference>
<dbReference type="GO" id="GO:0006397">
    <property type="term" value="P:mRNA processing"/>
    <property type="evidence" value="ECO:0007669"/>
    <property type="project" value="UniProtKB-KW"/>
</dbReference>
<dbReference type="GO" id="GO:0008380">
    <property type="term" value="P:RNA splicing"/>
    <property type="evidence" value="ECO:0007669"/>
    <property type="project" value="UniProtKB-UniRule"/>
</dbReference>
<dbReference type="GO" id="GO:0008033">
    <property type="term" value="P:tRNA processing"/>
    <property type="evidence" value="ECO:0007669"/>
    <property type="project" value="UniProtKB-KW"/>
</dbReference>
<dbReference type="HAMAP" id="MF_01390">
    <property type="entry name" value="MatK"/>
    <property type="match status" value="1"/>
</dbReference>
<dbReference type="InterPro" id="IPR024937">
    <property type="entry name" value="Domain_X"/>
</dbReference>
<dbReference type="InterPro" id="IPR002866">
    <property type="entry name" value="Maturase_MatK"/>
</dbReference>
<dbReference type="InterPro" id="IPR024942">
    <property type="entry name" value="Maturase_MatK_N"/>
</dbReference>
<dbReference type="PANTHER" id="PTHR34811">
    <property type="entry name" value="MATURASE K"/>
    <property type="match status" value="1"/>
</dbReference>
<dbReference type="PANTHER" id="PTHR34811:SF1">
    <property type="entry name" value="MATURASE K"/>
    <property type="match status" value="1"/>
</dbReference>
<dbReference type="Pfam" id="PF01348">
    <property type="entry name" value="Intron_maturas2"/>
    <property type="match status" value="1"/>
</dbReference>
<dbReference type="Pfam" id="PF01824">
    <property type="entry name" value="MatK_N"/>
    <property type="match status" value="1"/>
</dbReference>
<name>MATK_GOSGO</name>
<keyword id="KW-0150">Chloroplast</keyword>
<keyword id="KW-0507">mRNA processing</keyword>
<keyword id="KW-0934">Plastid</keyword>
<keyword id="KW-0694">RNA-binding</keyword>
<keyword id="KW-0819">tRNA processing</keyword>
<geneLocation type="chloroplast"/>